<comment type="function">
    <text evidence="1">Part of the outer membrane protein assembly complex, which is involved in assembly and insertion of beta-barrel proteins into the outer membrane.</text>
</comment>
<comment type="subunit">
    <text evidence="1">Part of the Bam complex.</text>
</comment>
<comment type="subcellular location">
    <subcellularLocation>
        <location evidence="1">Cell outer membrane</location>
        <topology evidence="1">Lipid-anchor</topology>
    </subcellularLocation>
</comment>
<comment type="similarity">
    <text evidence="1">Belongs to the BamB family.</text>
</comment>
<accession>Q0AE45</accession>
<protein>
    <recommendedName>
        <fullName evidence="1">Outer membrane protein assembly factor BamB</fullName>
    </recommendedName>
</protein>
<keyword id="KW-0998">Cell outer membrane</keyword>
<keyword id="KW-0449">Lipoprotein</keyword>
<keyword id="KW-0472">Membrane</keyword>
<keyword id="KW-0564">Palmitate</keyword>
<keyword id="KW-0732">Signal</keyword>
<name>BAMB_NITEC</name>
<feature type="signal peptide" evidence="1">
    <location>
        <begin position="1"/>
        <end position="34"/>
    </location>
</feature>
<feature type="chain" id="PRO_0000417684" description="Outer membrane protein assembly factor BamB">
    <location>
        <begin position="35"/>
        <end position="409"/>
    </location>
</feature>
<feature type="lipid moiety-binding region" description="N-palmitoyl cysteine" evidence="1">
    <location>
        <position position="35"/>
    </location>
</feature>
<feature type="lipid moiety-binding region" description="S-diacylglycerol cysteine" evidence="1">
    <location>
        <position position="35"/>
    </location>
</feature>
<sequence>MAGNILLLILDYVFHAGSRTLRVCILSLLILLSGCANLSDLGGGHLTDLFSSEEDEVEIDEAEIVALQTLAPINPLWQVKLAESKTAVFLPVYDNGALYVADEDGRLVKLDPVTGREIWRVETKSQLSGGVGAGGGMILLGTYKGEVLAFDEAGNALWQSRVPGEVLSPPKTDSGIVVVRTGDSKLFGLNATDGKRIWSYQSVTPPLTVRSFVGVSITRGAVFAGFPGGKLIALDLLTGNVGWEETVSQPHGVTELERMTDISSLPIVDENQVCAVAYRGRAACFEISSGNQIWARDASSSMGMVIDNHHVYISEEHGIVAAYDKSSGTAVWKRGKLGSRKLSGLMIVRGNRLVVGDDQGFVTLINRQDGSLLARSPTDGGIILSRAEYLPDGFVVQTLKGGVFAFSLQ</sequence>
<organism>
    <name type="scientific">Nitrosomonas eutropha (strain DSM 101675 / C91 / Nm57)</name>
    <dbReference type="NCBI Taxonomy" id="335283"/>
    <lineage>
        <taxon>Bacteria</taxon>
        <taxon>Pseudomonadati</taxon>
        <taxon>Pseudomonadota</taxon>
        <taxon>Betaproteobacteria</taxon>
        <taxon>Nitrosomonadales</taxon>
        <taxon>Nitrosomonadaceae</taxon>
        <taxon>Nitrosomonas</taxon>
    </lineage>
</organism>
<reference key="1">
    <citation type="journal article" date="2007" name="Environ. Microbiol.">
        <title>Whole-genome analysis of the ammonia-oxidizing bacterium, Nitrosomonas eutropha C91: implications for niche adaptation.</title>
        <authorList>
            <person name="Stein L.Y."/>
            <person name="Arp D.J."/>
            <person name="Berube P.M."/>
            <person name="Chain P.S."/>
            <person name="Hauser L."/>
            <person name="Jetten M.S."/>
            <person name="Klotz M.G."/>
            <person name="Larimer F.W."/>
            <person name="Norton J.M."/>
            <person name="Op den Camp H.J.M."/>
            <person name="Shin M."/>
            <person name="Wei X."/>
        </authorList>
    </citation>
    <scope>NUCLEOTIDE SEQUENCE [LARGE SCALE GENOMIC DNA]</scope>
    <source>
        <strain>DSM 101675 / C91 / Nm57</strain>
    </source>
</reference>
<dbReference type="EMBL" id="CP000450">
    <property type="protein sequence ID" value="ABI60387.1"/>
    <property type="molecule type" value="Genomic_DNA"/>
</dbReference>
<dbReference type="RefSeq" id="WP_011635184.1">
    <property type="nucleotide sequence ID" value="NC_008344.1"/>
</dbReference>
<dbReference type="SMR" id="Q0AE45"/>
<dbReference type="STRING" id="335283.Neut_2165"/>
<dbReference type="KEGG" id="net:Neut_2165"/>
<dbReference type="eggNOG" id="COG1520">
    <property type="taxonomic scope" value="Bacteria"/>
</dbReference>
<dbReference type="HOGENOM" id="CLU_027480_0_1_4"/>
<dbReference type="OrthoDB" id="5173551at2"/>
<dbReference type="Proteomes" id="UP000001966">
    <property type="component" value="Chromosome"/>
</dbReference>
<dbReference type="GO" id="GO:0009279">
    <property type="term" value="C:cell outer membrane"/>
    <property type="evidence" value="ECO:0007669"/>
    <property type="project" value="UniProtKB-SubCell"/>
</dbReference>
<dbReference type="GO" id="GO:0043165">
    <property type="term" value="P:Gram-negative-bacterium-type cell outer membrane assembly"/>
    <property type="evidence" value="ECO:0007669"/>
    <property type="project" value="UniProtKB-UniRule"/>
</dbReference>
<dbReference type="GO" id="GO:0051205">
    <property type="term" value="P:protein insertion into membrane"/>
    <property type="evidence" value="ECO:0007669"/>
    <property type="project" value="UniProtKB-UniRule"/>
</dbReference>
<dbReference type="Gene3D" id="2.130.10.10">
    <property type="entry name" value="YVTN repeat-like/Quinoprotein amine dehydrogenase"/>
    <property type="match status" value="1"/>
</dbReference>
<dbReference type="HAMAP" id="MF_00923">
    <property type="entry name" value="OM_assembly_BamB"/>
    <property type="match status" value="1"/>
</dbReference>
<dbReference type="InterPro" id="IPR017687">
    <property type="entry name" value="BamB"/>
</dbReference>
<dbReference type="InterPro" id="IPR018391">
    <property type="entry name" value="PQQ_b-propeller_rpt"/>
</dbReference>
<dbReference type="InterPro" id="IPR002372">
    <property type="entry name" value="PQQ_rpt_dom"/>
</dbReference>
<dbReference type="InterPro" id="IPR011047">
    <property type="entry name" value="Quinoprotein_ADH-like_sf"/>
</dbReference>
<dbReference type="InterPro" id="IPR015943">
    <property type="entry name" value="WD40/YVTN_repeat-like_dom_sf"/>
</dbReference>
<dbReference type="NCBIfam" id="TIGR03300">
    <property type="entry name" value="assembly_YfgL"/>
    <property type="match status" value="1"/>
</dbReference>
<dbReference type="PANTHER" id="PTHR34512">
    <property type="entry name" value="CELL SURFACE PROTEIN"/>
    <property type="match status" value="1"/>
</dbReference>
<dbReference type="PANTHER" id="PTHR34512:SF30">
    <property type="entry name" value="OUTER MEMBRANE PROTEIN ASSEMBLY FACTOR BAMB"/>
    <property type="match status" value="1"/>
</dbReference>
<dbReference type="Pfam" id="PF13360">
    <property type="entry name" value="PQQ_2"/>
    <property type="match status" value="1"/>
</dbReference>
<dbReference type="SMART" id="SM00564">
    <property type="entry name" value="PQQ"/>
    <property type="match status" value="6"/>
</dbReference>
<dbReference type="SUPFAM" id="SSF50998">
    <property type="entry name" value="Quinoprotein alcohol dehydrogenase-like"/>
    <property type="match status" value="1"/>
</dbReference>
<proteinExistence type="inferred from homology"/>
<gene>
    <name evidence="1" type="primary">bamB</name>
    <name type="ordered locus">Neut_2165</name>
</gene>
<evidence type="ECO:0000255" key="1">
    <source>
        <dbReference type="HAMAP-Rule" id="MF_00923"/>
    </source>
</evidence>